<keyword id="KW-0050">Antiport</keyword>
<keyword id="KW-0997">Cell inner membrane</keyword>
<keyword id="KW-1003">Cell membrane</keyword>
<keyword id="KW-0406">Ion transport</keyword>
<keyword id="KW-0472">Membrane</keyword>
<keyword id="KW-0614">Plasmid</keyword>
<keyword id="KW-1185">Reference proteome</keyword>
<keyword id="KW-0915">Sodium</keyword>
<keyword id="KW-0739">Sodium transport</keyword>
<keyword id="KW-0812">Transmembrane</keyword>
<keyword id="KW-1133">Transmembrane helix</keyword>
<keyword id="KW-0813">Transport</keyword>
<feature type="chain" id="PRO_0000334390" description="Na(+)/H(+) antiporter NhaA">
    <location>
        <begin position="1"/>
        <end position="437"/>
    </location>
</feature>
<feature type="transmembrane region" description="Helical" evidence="1">
    <location>
        <begin position="29"/>
        <end position="49"/>
    </location>
</feature>
<feature type="transmembrane region" description="Helical" evidence="1">
    <location>
        <begin position="74"/>
        <end position="94"/>
    </location>
</feature>
<feature type="transmembrane region" description="Helical" evidence="1">
    <location>
        <begin position="111"/>
        <end position="131"/>
    </location>
</feature>
<feature type="transmembrane region" description="Helical" evidence="1">
    <location>
        <begin position="139"/>
        <end position="159"/>
    </location>
</feature>
<feature type="transmembrane region" description="Helical" evidence="1">
    <location>
        <begin position="168"/>
        <end position="188"/>
    </location>
</feature>
<feature type="transmembrane region" description="Helical" evidence="1">
    <location>
        <begin position="196"/>
        <end position="216"/>
    </location>
</feature>
<feature type="transmembrane region" description="Helical" evidence="1">
    <location>
        <begin position="229"/>
        <end position="249"/>
    </location>
</feature>
<feature type="transmembrane region" description="Helical" evidence="1">
    <location>
        <begin position="307"/>
        <end position="327"/>
    </location>
</feature>
<feature type="transmembrane region" description="Helical" evidence="1">
    <location>
        <begin position="341"/>
        <end position="361"/>
    </location>
</feature>
<feature type="transmembrane region" description="Helical" evidence="1">
    <location>
        <begin position="376"/>
        <end position="396"/>
    </location>
</feature>
<feature type="transmembrane region" description="Helical" evidence="1">
    <location>
        <begin position="411"/>
        <end position="431"/>
    </location>
</feature>
<accession>Q92Y37</accession>
<reference key="1">
    <citation type="journal article" date="2001" name="Proc. Natl. Acad. Sci. U.S.A.">
        <title>Nucleotide sequence and predicted functions of the entire Sinorhizobium meliloti pSymA megaplasmid.</title>
        <authorList>
            <person name="Barnett M.J."/>
            <person name="Fisher R.F."/>
            <person name="Jones T."/>
            <person name="Komp C."/>
            <person name="Abola A.P."/>
            <person name="Barloy-Hubler F."/>
            <person name="Bowser L."/>
            <person name="Capela D."/>
            <person name="Galibert F."/>
            <person name="Gouzy J."/>
            <person name="Gurjal M."/>
            <person name="Hong A."/>
            <person name="Huizar L."/>
            <person name="Hyman R.W."/>
            <person name="Kahn D."/>
            <person name="Kahn M.L."/>
            <person name="Kalman S."/>
            <person name="Keating D.H."/>
            <person name="Palm C."/>
            <person name="Peck M.C."/>
            <person name="Surzycki R."/>
            <person name="Wells D.H."/>
            <person name="Yeh K.-C."/>
            <person name="Davis R.W."/>
            <person name="Federspiel N.A."/>
            <person name="Long S.R."/>
        </authorList>
    </citation>
    <scope>NUCLEOTIDE SEQUENCE [LARGE SCALE GENOMIC DNA]</scope>
    <source>
        <strain>1021</strain>
    </source>
</reference>
<reference key="2">
    <citation type="journal article" date="2001" name="Science">
        <title>The composite genome of the legume symbiont Sinorhizobium meliloti.</title>
        <authorList>
            <person name="Galibert F."/>
            <person name="Finan T.M."/>
            <person name="Long S.R."/>
            <person name="Puehler A."/>
            <person name="Abola P."/>
            <person name="Ampe F."/>
            <person name="Barloy-Hubler F."/>
            <person name="Barnett M.J."/>
            <person name="Becker A."/>
            <person name="Boistard P."/>
            <person name="Bothe G."/>
            <person name="Boutry M."/>
            <person name="Bowser L."/>
            <person name="Buhrmester J."/>
            <person name="Cadieu E."/>
            <person name="Capela D."/>
            <person name="Chain P."/>
            <person name="Cowie A."/>
            <person name="Davis R.W."/>
            <person name="Dreano S."/>
            <person name="Federspiel N.A."/>
            <person name="Fisher R.F."/>
            <person name="Gloux S."/>
            <person name="Godrie T."/>
            <person name="Goffeau A."/>
            <person name="Golding B."/>
            <person name="Gouzy J."/>
            <person name="Gurjal M."/>
            <person name="Hernandez-Lucas I."/>
            <person name="Hong A."/>
            <person name="Huizar L."/>
            <person name="Hyman R.W."/>
            <person name="Jones T."/>
            <person name="Kahn D."/>
            <person name="Kahn M.L."/>
            <person name="Kalman S."/>
            <person name="Keating D.H."/>
            <person name="Kiss E."/>
            <person name="Komp C."/>
            <person name="Lelaure V."/>
            <person name="Masuy D."/>
            <person name="Palm C."/>
            <person name="Peck M.C."/>
            <person name="Pohl T.M."/>
            <person name="Portetelle D."/>
            <person name="Purnelle B."/>
            <person name="Ramsperger U."/>
            <person name="Surzycki R."/>
            <person name="Thebault P."/>
            <person name="Vandenbol M."/>
            <person name="Vorhoelter F.J."/>
            <person name="Weidner S."/>
            <person name="Wells D.H."/>
            <person name="Wong K."/>
            <person name="Yeh K.-C."/>
            <person name="Batut J."/>
        </authorList>
    </citation>
    <scope>NUCLEOTIDE SEQUENCE [LARGE SCALE GENOMIC DNA]</scope>
    <source>
        <strain>1021</strain>
    </source>
</reference>
<sequence>MNDSLSRLPREPADRLTKPFMRFLRIEATAGIILLLSTLLALGLANTAWSSSFLAFWEMPAGVRLGDIGIYRSLKHWINDGLMTFFFFVIALELKRELVLGELRNPRMAALPVAAALGGMAAPAGIYLLLVGGGPGASGWGTVMSTDTAFVIGCLALLGSRVPGSLRLFLLSLAIFDDIGAILIVAVGYGEPLNWVALGTGGLGFAFVAGIALLGIRSIPVYFAMGSAIWLAFDASGVHATLVGVILGLMTPARRWVSEIRLHAILDRVIAHPPGDHRSRDTAARSDLHRAGVATREAVSPIERLEIALHPWVAFAIMPLFAVSNAGIPIEDANFDVPLTIAIVVAFVVGKPAGIVLFSFLAVKLRLASRPEQLSWSLLAAGSLLTGIGFTMALFIAELAFEPELLIPVKLGVLGASVISAALGFMALTLLTSPNRR</sequence>
<organism>
    <name type="scientific">Rhizobium meliloti (strain 1021)</name>
    <name type="common">Ensifer meliloti</name>
    <name type="synonym">Sinorhizobium meliloti</name>
    <dbReference type="NCBI Taxonomy" id="266834"/>
    <lineage>
        <taxon>Bacteria</taxon>
        <taxon>Pseudomonadati</taxon>
        <taxon>Pseudomonadota</taxon>
        <taxon>Alphaproteobacteria</taxon>
        <taxon>Hyphomicrobiales</taxon>
        <taxon>Rhizobiaceae</taxon>
        <taxon>Sinorhizobium/Ensifer group</taxon>
        <taxon>Sinorhizobium</taxon>
    </lineage>
</organism>
<geneLocation type="plasmid">
    <name>pSymA</name>
    <name>megaplasmid 1</name>
</geneLocation>
<dbReference type="EMBL" id="AE006469">
    <property type="protein sequence ID" value="AAK65709.2"/>
    <property type="status" value="ALT_INIT"/>
    <property type="molecule type" value="Genomic_DNA"/>
</dbReference>
<dbReference type="PIR" id="C95393">
    <property type="entry name" value="C95393"/>
</dbReference>
<dbReference type="RefSeq" id="NP_436297.2">
    <property type="nucleotide sequence ID" value="NC_003037.1"/>
</dbReference>
<dbReference type="RefSeq" id="WP_041169998.1">
    <property type="nucleotide sequence ID" value="NC_003037.1"/>
</dbReference>
<dbReference type="SMR" id="Q92Y37"/>
<dbReference type="EnsemblBacteria" id="AAK65709">
    <property type="protein sequence ID" value="AAK65709"/>
    <property type="gene ID" value="SMa1913"/>
</dbReference>
<dbReference type="KEGG" id="sme:SMa1913"/>
<dbReference type="PATRIC" id="fig|266834.11.peg.1086"/>
<dbReference type="HOGENOM" id="CLU_015803_1_2_5"/>
<dbReference type="OrthoDB" id="9808135at2"/>
<dbReference type="Proteomes" id="UP000001976">
    <property type="component" value="Plasmid pSymA"/>
</dbReference>
<dbReference type="GO" id="GO:0005886">
    <property type="term" value="C:plasma membrane"/>
    <property type="evidence" value="ECO:0007669"/>
    <property type="project" value="UniProtKB-SubCell"/>
</dbReference>
<dbReference type="GO" id="GO:0015385">
    <property type="term" value="F:sodium:proton antiporter activity"/>
    <property type="evidence" value="ECO:0007669"/>
    <property type="project" value="TreeGrafter"/>
</dbReference>
<dbReference type="GO" id="GO:0006885">
    <property type="term" value="P:regulation of pH"/>
    <property type="evidence" value="ECO:0007669"/>
    <property type="project" value="InterPro"/>
</dbReference>
<dbReference type="Gene3D" id="1.20.1530.10">
    <property type="entry name" value="Na+/H+ antiporter like domain"/>
    <property type="match status" value="1"/>
</dbReference>
<dbReference type="HAMAP" id="MF_01844">
    <property type="entry name" value="NhaA"/>
    <property type="match status" value="1"/>
</dbReference>
<dbReference type="InterPro" id="IPR023171">
    <property type="entry name" value="Na/H_antiporter_dom_sf"/>
</dbReference>
<dbReference type="InterPro" id="IPR004670">
    <property type="entry name" value="NhaA"/>
</dbReference>
<dbReference type="NCBIfam" id="TIGR00773">
    <property type="entry name" value="NhaA"/>
    <property type="match status" value="1"/>
</dbReference>
<dbReference type="PANTHER" id="PTHR30341:SF0">
    <property type="entry name" value="NA(+)_H(+) ANTIPORTER NHAA"/>
    <property type="match status" value="1"/>
</dbReference>
<dbReference type="PANTHER" id="PTHR30341">
    <property type="entry name" value="SODIUM ION/PROTON ANTIPORTER NHAA-RELATED"/>
    <property type="match status" value="1"/>
</dbReference>
<dbReference type="Pfam" id="PF06965">
    <property type="entry name" value="Na_H_antiport_1"/>
    <property type="match status" value="1"/>
</dbReference>
<protein>
    <recommendedName>
        <fullName evidence="1">Na(+)/H(+) antiporter NhaA</fullName>
    </recommendedName>
    <alternativeName>
        <fullName evidence="1">Sodium/proton antiporter NhaA</fullName>
    </alternativeName>
</protein>
<evidence type="ECO:0000255" key="1">
    <source>
        <dbReference type="HAMAP-Rule" id="MF_01844"/>
    </source>
</evidence>
<evidence type="ECO:0000305" key="2"/>
<proteinExistence type="inferred from homology"/>
<comment type="function">
    <text evidence="1">Na(+)/H(+) antiporter that extrudes sodium in exchange for external protons.</text>
</comment>
<comment type="catalytic activity">
    <reaction evidence="1">
        <text>Na(+)(in) + 2 H(+)(out) = Na(+)(out) + 2 H(+)(in)</text>
        <dbReference type="Rhea" id="RHEA:29251"/>
        <dbReference type="ChEBI" id="CHEBI:15378"/>
        <dbReference type="ChEBI" id="CHEBI:29101"/>
    </reaction>
    <physiologicalReaction direction="left-to-right" evidence="1">
        <dbReference type="Rhea" id="RHEA:29252"/>
    </physiologicalReaction>
</comment>
<comment type="subcellular location">
    <subcellularLocation>
        <location evidence="1">Cell inner membrane</location>
        <topology evidence="1">Multi-pass membrane protein</topology>
    </subcellularLocation>
</comment>
<comment type="similarity">
    <text evidence="1">Belongs to the NhaA Na(+)/H(+) (TC 2.A.33) antiporter family.</text>
</comment>
<comment type="sequence caution" evidence="2">
    <conflict type="erroneous initiation">
        <sequence resource="EMBL-CDS" id="AAK65709"/>
    </conflict>
</comment>
<gene>
    <name evidence="1" type="primary">nhaA</name>
    <name type="ordered locus">RA1051</name>
    <name type="ORF">SMa1913</name>
</gene>
<name>NHAA_RHIME</name>